<reference key="1">
    <citation type="journal article" date="2009" name="Appl. Environ. Microbiol.">
        <title>Three genomes from the phylum Acidobacteria provide insight into the lifestyles of these microorganisms in soils.</title>
        <authorList>
            <person name="Ward N.L."/>
            <person name="Challacombe J.F."/>
            <person name="Janssen P.H."/>
            <person name="Henrissat B."/>
            <person name="Coutinho P.M."/>
            <person name="Wu M."/>
            <person name="Xie G."/>
            <person name="Haft D.H."/>
            <person name="Sait M."/>
            <person name="Badger J."/>
            <person name="Barabote R.D."/>
            <person name="Bradley B."/>
            <person name="Brettin T.S."/>
            <person name="Brinkac L.M."/>
            <person name="Bruce D."/>
            <person name="Creasy T."/>
            <person name="Daugherty S.C."/>
            <person name="Davidsen T.M."/>
            <person name="DeBoy R.T."/>
            <person name="Detter J.C."/>
            <person name="Dodson R.J."/>
            <person name="Durkin A.S."/>
            <person name="Ganapathy A."/>
            <person name="Gwinn-Giglio M."/>
            <person name="Han C.S."/>
            <person name="Khouri H."/>
            <person name="Kiss H."/>
            <person name="Kothari S.P."/>
            <person name="Madupu R."/>
            <person name="Nelson K.E."/>
            <person name="Nelson W.C."/>
            <person name="Paulsen I."/>
            <person name="Penn K."/>
            <person name="Ren Q."/>
            <person name="Rosovitz M.J."/>
            <person name="Selengut J.D."/>
            <person name="Shrivastava S."/>
            <person name="Sullivan S.A."/>
            <person name="Tapia R."/>
            <person name="Thompson L.S."/>
            <person name="Watkins K.L."/>
            <person name="Yang Q."/>
            <person name="Yu C."/>
            <person name="Zafar N."/>
            <person name="Zhou L."/>
            <person name="Kuske C.R."/>
        </authorList>
    </citation>
    <scope>NUCLEOTIDE SEQUENCE [LARGE SCALE GENOMIC DNA]</scope>
    <source>
        <strain>Ellin6076</strain>
    </source>
</reference>
<organism>
    <name type="scientific">Solibacter usitatus (strain Ellin6076)</name>
    <dbReference type="NCBI Taxonomy" id="234267"/>
    <lineage>
        <taxon>Bacteria</taxon>
        <taxon>Pseudomonadati</taxon>
        <taxon>Acidobacteriota</taxon>
        <taxon>Terriglobia</taxon>
        <taxon>Bryobacterales</taxon>
        <taxon>Solibacteraceae</taxon>
        <taxon>Candidatus Solibacter</taxon>
    </lineage>
</organism>
<feature type="chain" id="PRO_0000321764" description="Ribosome maturation factor RimM">
    <location>
        <begin position="1"/>
        <end position="176"/>
    </location>
</feature>
<feature type="domain" description="PRC barrel" evidence="1">
    <location>
        <begin position="101"/>
        <end position="170"/>
    </location>
</feature>
<protein>
    <recommendedName>
        <fullName evidence="1">Ribosome maturation factor RimM</fullName>
    </recommendedName>
</protein>
<evidence type="ECO:0000255" key="1">
    <source>
        <dbReference type="HAMAP-Rule" id="MF_00014"/>
    </source>
</evidence>
<sequence length="176" mass="19246">MSVEETGWVTVALVGKTRGNRGEVTAVVLSSRPERYQDLQEVFLFGPGLPEAGERREVEEAWYHLQTLVLKFRGVDTISEAESLYGAEVRIPASQRISLDEGEYFESDLIGCEVVDRQSGQSLGKVSAWDDGGGSGLLVVGDLLIPFARAICVEINPAAKRITVELPEGLKDLNRP</sequence>
<gene>
    <name evidence="1" type="primary">rimM</name>
    <name type="ordered locus">Acid_2570</name>
</gene>
<accession>Q024L7</accession>
<proteinExistence type="inferred from homology"/>
<keyword id="KW-0143">Chaperone</keyword>
<keyword id="KW-0963">Cytoplasm</keyword>
<keyword id="KW-0690">Ribosome biogenesis</keyword>
<keyword id="KW-0698">rRNA processing</keyword>
<name>RIMM_SOLUE</name>
<dbReference type="EMBL" id="CP000473">
    <property type="protein sequence ID" value="ABJ83559.1"/>
    <property type="molecule type" value="Genomic_DNA"/>
</dbReference>
<dbReference type="SMR" id="Q024L7"/>
<dbReference type="FunCoup" id="Q024L7">
    <property type="interactions" value="432"/>
</dbReference>
<dbReference type="STRING" id="234267.Acid_2570"/>
<dbReference type="KEGG" id="sus:Acid_2570"/>
<dbReference type="eggNOG" id="COG0806">
    <property type="taxonomic scope" value="Bacteria"/>
</dbReference>
<dbReference type="HOGENOM" id="CLU_077636_3_0_0"/>
<dbReference type="InParanoid" id="Q024L7"/>
<dbReference type="GO" id="GO:0005737">
    <property type="term" value="C:cytoplasm"/>
    <property type="evidence" value="ECO:0007669"/>
    <property type="project" value="UniProtKB-SubCell"/>
</dbReference>
<dbReference type="GO" id="GO:0005840">
    <property type="term" value="C:ribosome"/>
    <property type="evidence" value="ECO:0007669"/>
    <property type="project" value="InterPro"/>
</dbReference>
<dbReference type="GO" id="GO:0043022">
    <property type="term" value="F:ribosome binding"/>
    <property type="evidence" value="ECO:0007669"/>
    <property type="project" value="InterPro"/>
</dbReference>
<dbReference type="GO" id="GO:0042274">
    <property type="term" value="P:ribosomal small subunit biogenesis"/>
    <property type="evidence" value="ECO:0007669"/>
    <property type="project" value="UniProtKB-UniRule"/>
</dbReference>
<dbReference type="GO" id="GO:0006364">
    <property type="term" value="P:rRNA processing"/>
    <property type="evidence" value="ECO:0007669"/>
    <property type="project" value="UniProtKB-UniRule"/>
</dbReference>
<dbReference type="Gene3D" id="2.30.30.240">
    <property type="entry name" value="PRC-barrel domain"/>
    <property type="match status" value="1"/>
</dbReference>
<dbReference type="Gene3D" id="2.40.30.60">
    <property type="entry name" value="RimM"/>
    <property type="match status" value="1"/>
</dbReference>
<dbReference type="HAMAP" id="MF_00014">
    <property type="entry name" value="Ribosome_mat_RimM"/>
    <property type="match status" value="1"/>
</dbReference>
<dbReference type="InterPro" id="IPR011033">
    <property type="entry name" value="PRC_barrel-like_sf"/>
</dbReference>
<dbReference type="InterPro" id="IPR056792">
    <property type="entry name" value="PRC_RimM"/>
</dbReference>
<dbReference type="InterPro" id="IPR011961">
    <property type="entry name" value="RimM"/>
</dbReference>
<dbReference type="InterPro" id="IPR002676">
    <property type="entry name" value="RimM_N"/>
</dbReference>
<dbReference type="InterPro" id="IPR036976">
    <property type="entry name" value="RimM_N_sf"/>
</dbReference>
<dbReference type="InterPro" id="IPR009000">
    <property type="entry name" value="Transl_B-barrel_sf"/>
</dbReference>
<dbReference type="NCBIfam" id="TIGR02273">
    <property type="entry name" value="16S_RimM"/>
    <property type="match status" value="1"/>
</dbReference>
<dbReference type="PANTHER" id="PTHR33692">
    <property type="entry name" value="RIBOSOME MATURATION FACTOR RIMM"/>
    <property type="match status" value="1"/>
</dbReference>
<dbReference type="PANTHER" id="PTHR33692:SF1">
    <property type="entry name" value="RIBOSOME MATURATION FACTOR RIMM"/>
    <property type="match status" value="1"/>
</dbReference>
<dbReference type="Pfam" id="PF24986">
    <property type="entry name" value="PRC_RimM"/>
    <property type="match status" value="1"/>
</dbReference>
<dbReference type="Pfam" id="PF01782">
    <property type="entry name" value="RimM"/>
    <property type="match status" value="1"/>
</dbReference>
<dbReference type="SUPFAM" id="SSF50346">
    <property type="entry name" value="PRC-barrel domain"/>
    <property type="match status" value="1"/>
</dbReference>
<dbReference type="SUPFAM" id="SSF50447">
    <property type="entry name" value="Translation proteins"/>
    <property type="match status" value="1"/>
</dbReference>
<comment type="function">
    <text evidence="1">An accessory protein needed during the final step in the assembly of 30S ribosomal subunit, possibly for assembly of the head region. Essential for efficient processing of 16S rRNA. May be needed both before and after RbfA during the maturation of 16S rRNA. It has affinity for free ribosomal 30S subunits but not for 70S ribosomes.</text>
</comment>
<comment type="subunit">
    <text evidence="1">Binds ribosomal protein uS19.</text>
</comment>
<comment type="subcellular location">
    <subcellularLocation>
        <location evidence="1">Cytoplasm</location>
    </subcellularLocation>
</comment>
<comment type="domain">
    <text evidence="1">The PRC barrel domain binds ribosomal protein uS19.</text>
</comment>
<comment type="similarity">
    <text evidence="1">Belongs to the RimM family.</text>
</comment>